<dbReference type="EC" id="2.1.3.3" evidence="2"/>
<dbReference type="EMBL" id="CP000745">
    <property type="protein sequence ID" value="ABR66630.1"/>
    <property type="molecule type" value="Genomic_DNA"/>
</dbReference>
<dbReference type="SMR" id="A6VJK4"/>
<dbReference type="STRING" id="426368.MmarC7_1572"/>
<dbReference type="KEGG" id="mmz:MmarC7_1572"/>
<dbReference type="eggNOG" id="arCOG00912">
    <property type="taxonomic scope" value="Archaea"/>
</dbReference>
<dbReference type="HOGENOM" id="CLU_043846_3_2_2"/>
<dbReference type="OrthoDB" id="4696at2157"/>
<dbReference type="UniPathway" id="UPA00068">
    <property type="reaction ID" value="UER00112"/>
</dbReference>
<dbReference type="GO" id="GO:0005737">
    <property type="term" value="C:cytoplasm"/>
    <property type="evidence" value="ECO:0007669"/>
    <property type="project" value="UniProtKB-SubCell"/>
</dbReference>
<dbReference type="GO" id="GO:0016597">
    <property type="term" value="F:amino acid binding"/>
    <property type="evidence" value="ECO:0007669"/>
    <property type="project" value="InterPro"/>
</dbReference>
<dbReference type="GO" id="GO:0004585">
    <property type="term" value="F:ornithine carbamoyltransferase activity"/>
    <property type="evidence" value="ECO:0007669"/>
    <property type="project" value="UniProtKB-UniRule"/>
</dbReference>
<dbReference type="GO" id="GO:0042450">
    <property type="term" value="P:arginine biosynthetic process via ornithine"/>
    <property type="evidence" value="ECO:0007669"/>
    <property type="project" value="TreeGrafter"/>
</dbReference>
<dbReference type="GO" id="GO:0019240">
    <property type="term" value="P:citrulline biosynthetic process"/>
    <property type="evidence" value="ECO:0007669"/>
    <property type="project" value="TreeGrafter"/>
</dbReference>
<dbReference type="GO" id="GO:0006526">
    <property type="term" value="P:L-arginine biosynthetic process"/>
    <property type="evidence" value="ECO:0007669"/>
    <property type="project" value="UniProtKB-UniPathway"/>
</dbReference>
<dbReference type="FunFam" id="3.40.50.1370:FF:000008">
    <property type="entry name" value="Ornithine carbamoyltransferase"/>
    <property type="match status" value="1"/>
</dbReference>
<dbReference type="Gene3D" id="3.40.50.1370">
    <property type="entry name" value="Aspartate/ornithine carbamoyltransferase"/>
    <property type="match status" value="2"/>
</dbReference>
<dbReference type="HAMAP" id="MF_01109">
    <property type="entry name" value="OTCase"/>
    <property type="match status" value="1"/>
</dbReference>
<dbReference type="InterPro" id="IPR006132">
    <property type="entry name" value="Asp/Orn_carbamoyltranf_P-bd"/>
</dbReference>
<dbReference type="InterPro" id="IPR006130">
    <property type="entry name" value="Asp/Orn_carbamoylTrfase"/>
</dbReference>
<dbReference type="InterPro" id="IPR036901">
    <property type="entry name" value="Asp/Orn_carbamoylTrfase_sf"/>
</dbReference>
<dbReference type="InterPro" id="IPR006131">
    <property type="entry name" value="Asp_carbamoyltransf_Asp/Orn-bd"/>
</dbReference>
<dbReference type="InterPro" id="IPR002292">
    <property type="entry name" value="Orn/put_carbamltrans"/>
</dbReference>
<dbReference type="InterPro" id="IPR024904">
    <property type="entry name" value="OTCase_ArgI"/>
</dbReference>
<dbReference type="NCBIfam" id="TIGR00658">
    <property type="entry name" value="orni_carb_tr"/>
    <property type="match status" value="1"/>
</dbReference>
<dbReference type="NCBIfam" id="NF001986">
    <property type="entry name" value="PRK00779.1"/>
    <property type="match status" value="1"/>
</dbReference>
<dbReference type="PANTHER" id="PTHR45753">
    <property type="entry name" value="ORNITHINE CARBAMOYLTRANSFERASE, MITOCHONDRIAL"/>
    <property type="match status" value="1"/>
</dbReference>
<dbReference type="PANTHER" id="PTHR45753:SF3">
    <property type="entry name" value="ORNITHINE TRANSCARBAMYLASE, MITOCHONDRIAL"/>
    <property type="match status" value="1"/>
</dbReference>
<dbReference type="Pfam" id="PF00185">
    <property type="entry name" value="OTCace"/>
    <property type="match status" value="1"/>
</dbReference>
<dbReference type="Pfam" id="PF02729">
    <property type="entry name" value="OTCace_N"/>
    <property type="match status" value="1"/>
</dbReference>
<dbReference type="PRINTS" id="PR00100">
    <property type="entry name" value="AOTCASE"/>
</dbReference>
<dbReference type="PRINTS" id="PR00102">
    <property type="entry name" value="OTCASE"/>
</dbReference>
<dbReference type="SUPFAM" id="SSF53671">
    <property type="entry name" value="Aspartate/ornithine carbamoyltransferase"/>
    <property type="match status" value="1"/>
</dbReference>
<evidence type="ECO:0000250" key="1"/>
<evidence type="ECO:0000255" key="2">
    <source>
        <dbReference type="HAMAP-Rule" id="MF_01109"/>
    </source>
</evidence>
<accession>A6VJK4</accession>
<reference key="1">
    <citation type="submission" date="2007-06" db="EMBL/GenBank/DDBJ databases">
        <title>Complete sequence of Methanococcus maripaludis C7.</title>
        <authorList>
            <consortium name="US DOE Joint Genome Institute"/>
            <person name="Copeland A."/>
            <person name="Lucas S."/>
            <person name="Lapidus A."/>
            <person name="Barry K."/>
            <person name="Glavina del Rio T."/>
            <person name="Dalin E."/>
            <person name="Tice H."/>
            <person name="Pitluck S."/>
            <person name="Clum A."/>
            <person name="Schmutz J."/>
            <person name="Larimer F."/>
            <person name="Land M."/>
            <person name="Hauser L."/>
            <person name="Kyrpides N."/>
            <person name="Anderson I."/>
            <person name="Sieprawska-Lupa M."/>
            <person name="Whitman W.B."/>
            <person name="Richardson P."/>
        </authorList>
    </citation>
    <scope>NUCLEOTIDE SEQUENCE [LARGE SCALE GENOMIC DNA]</scope>
    <source>
        <strain>C7 / ATCC BAA-1331</strain>
    </source>
</reference>
<keyword id="KW-0028">Amino-acid biosynthesis</keyword>
<keyword id="KW-0055">Arginine biosynthesis</keyword>
<keyword id="KW-0963">Cytoplasm</keyword>
<keyword id="KW-0808">Transferase</keyword>
<sequence length="304" mass="33963">MDLLTLWNLEREEVLKIIENAEYFKKNRYGHDILKNKSIALIFESPSTRTRMSFDLAVHELGGHSLMMNEGEIHLGKKESIADTARVMSRFVDAIVARVKSHKTLEDLAEYGSVPVINALCDLAHPCQILADLLTMKENGKNFKGLKLAYFGDGNNVSNSLMIAGAILGMDVVIATPRSYEPSGLFVKKALEIIAKYGEGSLTLTDDPEIAAKDADVLYTDVWISMSDKNKNLDEILKIFPKFQINAELLSKAKEDAIVLHCLPANRGLEITDEVIDGKQSKVFDQAENRLHAQKAVLKYIFEH</sequence>
<protein>
    <recommendedName>
        <fullName evidence="2">Ornithine carbamoyltransferase</fullName>
        <shortName evidence="2">OTCase</shortName>
        <ecNumber evidence="2">2.1.3.3</ecNumber>
    </recommendedName>
</protein>
<comment type="function">
    <text evidence="1">Reversibly catalyzes the transfer of the carbamoyl group from carbamoyl phosphate (CP) to the N(epsilon) atom of ornithine (ORN) to produce L-citrulline.</text>
</comment>
<comment type="catalytic activity">
    <reaction evidence="2">
        <text>carbamoyl phosphate + L-ornithine = L-citrulline + phosphate + H(+)</text>
        <dbReference type="Rhea" id="RHEA:19513"/>
        <dbReference type="ChEBI" id="CHEBI:15378"/>
        <dbReference type="ChEBI" id="CHEBI:43474"/>
        <dbReference type="ChEBI" id="CHEBI:46911"/>
        <dbReference type="ChEBI" id="CHEBI:57743"/>
        <dbReference type="ChEBI" id="CHEBI:58228"/>
        <dbReference type="EC" id="2.1.3.3"/>
    </reaction>
</comment>
<comment type="pathway">
    <text evidence="2">Amino-acid biosynthesis; L-arginine biosynthesis; L-arginine from L-ornithine and carbamoyl phosphate: step 1/3.</text>
</comment>
<comment type="subcellular location">
    <subcellularLocation>
        <location evidence="2">Cytoplasm</location>
    </subcellularLocation>
</comment>
<comment type="similarity">
    <text evidence="2">Belongs to the aspartate/ornithine carbamoyltransferase superfamily. OTCase family.</text>
</comment>
<name>OTC_METM7</name>
<feature type="chain" id="PRO_1000084850" description="Ornithine carbamoyltransferase">
    <location>
        <begin position="1"/>
        <end position="304"/>
    </location>
</feature>
<feature type="binding site" evidence="2">
    <location>
        <begin position="47"/>
        <end position="50"/>
    </location>
    <ligand>
        <name>carbamoyl phosphate</name>
        <dbReference type="ChEBI" id="CHEBI:58228"/>
    </ligand>
</feature>
<feature type="binding site" evidence="2">
    <location>
        <position position="98"/>
    </location>
    <ligand>
        <name>carbamoyl phosphate</name>
        <dbReference type="ChEBI" id="CHEBI:58228"/>
    </ligand>
</feature>
<feature type="binding site" evidence="2">
    <location>
        <begin position="125"/>
        <end position="128"/>
    </location>
    <ligand>
        <name>carbamoyl phosphate</name>
        <dbReference type="ChEBI" id="CHEBI:58228"/>
    </ligand>
</feature>
<feature type="binding site" evidence="2">
    <location>
        <position position="156"/>
    </location>
    <ligand>
        <name>L-ornithine</name>
        <dbReference type="ChEBI" id="CHEBI:46911"/>
    </ligand>
</feature>
<feature type="binding site" evidence="2">
    <location>
        <position position="221"/>
    </location>
    <ligand>
        <name>L-ornithine</name>
        <dbReference type="ChEBI" id="CHEBI:46911"/>
    </ligand>
</feature>
<feature type="binding site" evidence="2">
    <location>
        <begin position="225"/>
        <end position="226"/>
    </location>
    <ligand>
        <name>L-ornithine</name>
        <dbReference type="ChEBI" id="CHEBI:46911"/>
    </ligand>
</feature>
<feature type="binding site" evidence="2">
    <location>
        <begin position="262"/>
        <end position="263"/>
    </location>
    <ligand>
        <name>carbamoyl phosphate</name>
        <dbReference type="ChEBI" id="CHEBI:58228"/>
    </ligand>
</feature>
<feature type="binding site" evidence="2">
    <location>
        <position position="290"/>
    </location>
    <ligand>
        <name>carbamoyl phosphate</name>
        <dbReference type="ChEBI" id="CHEBI:58228"/>
    </ligand>
</feature>
<gene>
    <name evidence="2" type="primary">argF</name>
    <name type="ordered locus">MmarC7_1572</name>
</gene>
<proteinExistence type="inferred from homology"/>
<organism>
    <name type="scientific">Methanococcus maripaludis (strain C7 / ATCC BAA-1331)</name>
    <dbReference type="NCBI Taxonomy" id="426368"/>
    <lineage>
        <taxon>Archaea</taxon>
        <taxon>Methanobacteriati</taxon>
        <taxon>Methanobacteriota</taxon>
        <taxon>Methanomada group</taxon>
        <taxon>Methanococci</taxon>
        <taxon>Methanococcales</taxon>
        <taxon>Methanococcaceae</taxon>
        <taxon>Methanococcus</taxon>
    </lineage>
</organism>